<name>Y239_METJA</name>
<sequence>MKNMDVYEILYQFCLEYEVLLDDEKIPLWKLKKEDLDKVDLDLPWTSIRDLAIYLYELKKKQQNSKELIKCDIVEILVGIALLKPEEGSNYMGLVTEDMCLTYLSELITARINCIARYYYMMKKPQNTNIFDEIILKFPQKKDIRASNINDLRELVGKIRNYFK</sequence>
<feature type="chain" id="PRO_0000106756" description="Uncharacterized protein MJ0239">
    <location>
        <begin position="1"/>
        <end position="164"/>
    </location>
</feature>
<reference key="1">
    <citation type="journal article" date="1996" name="Science">
        <title>Complete genome sequence of the methanogenic archaeon, Methanococcus jannaschii.</title>
        <authorList>
            <person name="Bult C.J."/>
            <person name="White O."/>
            <person name="Olsen G.J."/>
            <person name="Zhou L."/>
            <person name="Fleischmann R.D."/>
            <person name="Sutton G.G."/>
            <person name="Blake J.A."/>
            <person name="FitzGerald L.M."/>
            <person name="Clayton R.A."/>
            <person name="Gocayne J.D."/>
            <person name="Kerlavage A.R."/>
            <person name="Dougherty B.A."/>
            <person name="Tomb J.-F."/>
            <person name="Adams M.D."/>
            <person name="Reich C.I."/>
            <person name="Overbeek R."/>
            <person name="Kirkness E.F."/>
            <person name="Weinstock K.G."/>
            <person name="Merrick J.M."/>
            <person name="Glodek A."/>
            <person name="Scott J.L."/>
            <person name="Geoghagen N.S.M."/>
            <person name="Weidman J.F."/>
            <person name="Fuhrmann J.L."/>
            <person name="Nguyen D."/>
            <person name="Utterback T.R."/>
            <person name="Kelley J.M."/>
            <person name="Peterson J.D."/>
            <person name="Sadow P.W."/>
            <person name="Hanna M.C."/>
            <person name="Cotton M.D."/>
            <person name="Roberts K.M."/>
            <person name="Hurst M.A."/>
            <person name="Kaine B.P."/>
            <person name="Borodovsky M."/>
            <person name="Klenk H.-P."/>
            <person name="Fraser C.M."/>
            <person name="Smith H.O."/>
            <person name="Woese C.R."/>
            <person name="Venter J.C."/>
        </authorList>
    </citation>
    <scope>NUCLEOTIDE SEQUENCE [LARGE SCALE GENOMIC DNA]</scope>
    <source>
        <strain>ATCC 43067 / DSM 2661 / JAL-1 / JCM 10045 / NBRC 100440</strain>
    </source>
</reference>
<organism>
    <name type="scientific">Methanocaldococcus jannaschii (strain ATCC 43067 / DSM 2661 / JAL-1 / JCM 10045 / NBRC 100440)</name>
    <name type="common">Methanococcus jannaschii</name>
    <dbReference type="NCBI Taxonomy" id="243232"/>
    <lineage>
        <taxon>Archaea</taxon>
        <taxon>Methanobacteriati</taxon>
        <taxon>Methanobacteriota</taxon>
        <taxon>Methanomada group</taxon>
        <taxon>Methanococci</taxon>
        <taxon>Methanococcales</taxon>
        <taxon>Methanocaldococcaceae</taxon>
        <taxon>Methanocaldococcus</taxon>
    </lineage>
</organism>
<protein>
    <recommendedName>
        <fullName>Uncharacterized protein MJ0239</fullName>
    </recommendedName>
</protein>
<keyword id="KW-1185">Reference proteome</keyword>
<accession>Q57691</accession>
<proteinExistence type="predicted"/>
<gene>
    <name type="ordered locus">MJ0239</name>
</gene>
<dbReference type="EMBL" id="L77117">
    <property type="protein sequence ID" value="AAB98228.1"/>
    <property type="molecule type" value="Genomic_DNA"/>
</dbReference>
<dbReference type="PIR" id="H64329">
    <property type="entry name" value="H64329"/>
</dbReference>
<dbReference type="FunCoup" id="Q57691">
    <property type="interactions" value="6"/>
</dbReference>
<dbReference type="STRING" id="243232.MJ_0239"/>
<dbReference type="PaxDb" id="243232-MJ_0239"/>
<dbReference type="EnsemblBacteria" id="AAB98228">
    <property type="protein sequence ID" value="AAB98228"/>
    <property type="gene ID" value="MJ_0239"/>
</dbReference>
<dbReference type="KEGG" id="mja:MJ_0239"/>
<dbReference type="eggNOG" id="arCOG05026">
    <property type="taxonomic scope" value="Archaea"/>
</dbReference>
<dbReference type="HOGENOM" id="CLU_1590906_0_0_2"/>
<dbReference type="InParanoid" id="Q57691"/>
<dbReference type="Proteomes" id="UP000000805">
    <property type="component" value="Chromosome"/>
</dbReference>